<dbReference type="EMBL" id="FN393082">
    <property type="protein sequence ID" value="CAY82115.1"/>
    <property type="molecule type" value="Genomic_DNA"/>
</dbReference>
<dbReference type="HOGENOM" id="CLU_035070_0_0_1"/>
<dbReference type="OrthoDB" id="34352at4893"/>
<dbReference type="Proteomes" id="UP000000286">
    <property type="component" value="Chromosome XIII, Scaffold EC1118_1M3"/>
</dbReference>
<dbReference type="GO" id="GO:0005739">
    <property type="term" value="C:mitochondrion"/>
    <property type="evidence" value="ECO:0007669"/>
    <property type="project" value="UniProtKB-SubCell"/>
</dbReference>
<dbReference type="GO" id="GO:0003723">
    <property type="term" value="F:RNA binding"/>
    <property type="evidence" value="ECO:0007669"/>
    <property type="project" value="UniProtKB-KW"/>
</dbReference>
<dbReference type="GO" id="GO:0006417">
    <property type="term" value="P:regulation of translation"/>
    <property type="evidence" value="ECO:0007669"/>
    <property type="project" value="UniProtKB-KW"/>
</dbReference>
<dbReference type="InterPro" id="IPR024319">
    <property type="entry name" value="ATPase_expression_mit"/>
</dbReference>
<dbReference type="Pfam" id="PF12921">
    <property type="entry name" value="ATP13"/>
    <property type="match status" value="1"/>
</dbReference>
<evidence type="ECO:0000250" key="1"/>
<evidence type="ECO:0000255" key="2"/>
<evidence type="ECO:0000305" key="3"/>
<keyword id="KW-0496">Mitochondrion</keyword>
<keyword id="KW-0694">RNA-binding</keyword>
<keyword id="KW-0809">Transit peptide</keyword>
<keyword id="KW-0810">Translation regulation</keyword>
<feature type="transit peptide" description="Mitochondrion" evidence="2">
    <location>
        <begin position="1"/>
        <end position="40"/>
    </location>
</feature>
<feature type="chain" id="PRO_0000405638" description="ATPase expression protein 2, mitochondrial">
    <location>
        <begin position="41"/>
        <end position="580"/>
    </location>
</feature>
<sequence>MWINRLVKHPSYSVLRFYTKRLCTVSVKSLREFGVLPNSTICHSVYPRRTYVMGRAVINDILIKKSYSTHTVCAIDRSKDENNGSAYDKFEAKGIPIDVHTLKRIISSSGMDESEFSKSISYLFAKTVDPEPKDVLSLEDLSFLLNKLYTQRFQIRRICRDINAKYSEFWFKLFSLYAEKVDAKRNQVNLRNTKLDACEIFDANLMIKNFIELGQLGKAQKILSFILDRNPDILLSPKNADISTIVHFLQLRCGALAPYWKIPDNSEQKQGFLRKMVRLGAKNTSIRLSSTYKAMDHQTLLKIADLALQEKKLLNSEDLLSTLIQSFGHLGQTQILERCIEHIWQISPQEFPSHVVIKHRGCYPSSKILVSILVSFYFNDHDLHRGLSILDSFIKHYPDVKLDALFWRRLFQLSHFAWTPANDKKATSVVRCWHLMKQWYASKRLRPSVDYETLRQLYDIMKKTGNFPLGIDVLRSFKPGIERTRAENAGKVNNIIIKYQKCIIKELVNRGRFSAVREFIDNYGFDRKMTKDLNIFCANRMFLRSKKMKNKIENKKEREKVRLDSFDDDEDDGMIIGSLW</sequence>
<organism>
    <name type="scientific">Saccharomyces cerevisiae (strain Lalvin EC1118 / Prise de mousse)</name>
    <name type="common">Baker's yeast</name>
    <dbReference type="NCBI Taxonomy" id="643680"/>
    <lineage>
        <taxon>Eukaryota</taxon>
        <taxon>Fungi</taxon>
        <taxon>Dikarya</taxon>
        <taxon>Ascomycota</taxon>
        <taxon>Saccharomycotina</taxon>
        <taxon>Saccharomycetes</taxon>
        <taxon>Saccharomycetales</taxon>
        <taxon>Saccharomycetaceae</taxon>
        <taxon>Saccharomyces</taxon>
    </lineage>
</organism>
<name>AEP2_YEAS8</name>
<accession>C8ZFE9</accession>
<comment type="function">
    <text evidence="1">Required for translation of the mitochondrial OLI1 transcript coding for the mitochondrial ATP synthase subunit 9.</text>
</comment>
<comment type="subunit">
    <text evidence="1">Binds to the 5'UTR of the OLI1 mRNA.</text>
</comment>
<comment type="subcellular location">
    <subcellularLocation>
        <location evidence="1">Mitochondrion</location>
    </subcellularLocation>
</comment>
<comment type="similarity">
    <text evidence="3">Belongs to the AEP2 family.</text>
</comment>
<reference key="1">
    <citation type="journal article" date="2009" name="Proc. Natl. Acad. Sci. U.S.A.">
        <title>Eukaryote-to-eukaryote gene transfer events revealed by the genome sequence of the wine yeast Saccharomyces cerevisiae EC1118.</title>
        <authorList>
            <person name="Novo M."/>
            <person name="Bigey F."/>
            <person name="Beyne E."/>
            <person name="Galeote V."/>
            <person name="Gavory F."/>
            <person name="Mallet S."/>
            <person name="Cambon B."/>
            <person name="Legras J.-L."/>
            <person name="Wincker P."/>
            <person name="Casaregola S."/>
            <person name="Dequin S."/>
        </authorList>
    </citation>
    <scope>NUCLEOTIDE SEQUENCE [LARGE SCALE GENOMIC DNA]</scope>
    <source>
        <strain>Lalvin EC1118 / Prise de mousse</strain>
    </source>
</reference>
<proteinExistence type="inferred from homology"/>
<gene>
    <name type="primary">AEP2</name>
    <name type="synonym">ATP13</name>
    <name type="ORF">EC1118_1M3_4929g</name>
</gene>
<protein>
    <recommendedName>
        <fullName>ATPase expression protein 2, mitochondrial</fullName>
    </recommendedName>
</protein>